<comment type="function">
    <text evidence="1">Catalyzes the condensation reaction of fatty acid synthesis by the addition to an acyl acceptor of two carbons from malonyl-ACP. Catalyzes the first condensation reaction which initiates fatty acid synthesis and may therefore play a role in governing the total rate of fatty acid production. Possesses both acetoacetyl-ACP synthase and acetyl transacylase activities. Its substrate specificity determines the biosynthesis of branched-chain and/or straight-chain of fatty acids.</text>
</comment>
<comment type="catalytic activity">
    <reaction evidence="1">
        <text>malonyl-[ACP] + acetyl-CoA + H(+) = 3-oxobutanoyl-[ACP] + CO2 + CoA</text>
        <dbReference type="Rhea" id="RHEA:12080"/>
        <dbReference type="Rhea" id="RHEA-COMP:9623"/>
        <dbReference type="Rhea" id="RHEA-COMP:9625"/>
        <dbReference type="ChEBI" id="CHEBI:15378"/>
        <dbReference type="ChEBI" id="CHEBI:16526"/>
        <dbReference type="ChEBI" id="CHEBI:57287"/>
        <dbReference type="ChEBI" id="CHEBI:57288"/>
        <dbReference type="ChEBI" id="CHEBI:78449"/>
        <dbReference type="ChEBI" id="CHEBI:78450"/>
        <dbReference type="EC" id="2.3.1.180"/>
    </reaction>
</comment>
<comment type="pathway">
    <text evidence="1">Lipid metabolism; fatty acid biosynthesis.</text>
</comment>
<comment type="subunit">
    <text evidence="1">Homodimer.</text>
</comment>
<comment type="subcellular location">
    <subcellularLocation>
        <location evidence="1">Cytoplasm</location>
    </subcellularLocation>
</comment>
<comment type="domain">
    <text evidence="1">The last Arg residue of the ACP-binding site is essential for the weak association between ACP/AcpP and FabH.</text>
</comment>
<comment type="similarity">
    <text evidence="1">Belongs to the thiolase-like superfamily. FabH family.</text>
</comment>
<keyword id="KW-0012">Acyltransferase</keyword>
<keyword id="KW-0963">Cytoplasm</keyword>
<keyword id="KW-0275">Fatty acid biosynthesis</keyword>
<keyword id="KW-0276">Fatty acid metabolism</keyword>
<keyword id="KW-0444">Lipid biosynthesis</keyword>
<keyword id="KW-0443">Lipid metabolism</keyword>
<keyword id="KW-0511">Multifunctional enzyme</keyword>
<keyword id="KW-1185">Reference proteome</keyword>
<keyword id="KW-0808">Transferase</keyword>
<proteinExistence type="inferred from homology"/>
<evidence type="ECO:0000255" key="1">
    <source>
        <dbReference type="HAMAP-Rule" id="MF_01815"/>
    </source>
</evidence>
<sequence length="317" mass="33515">MYTKIIGTGSYLPEQVRTNADLEKMVDTSDEWIVTRTGIRERHIAAPNETVSTMGFEAATRAIEMAGIEKDQIGLIVVATTSATHAFPSAACQIQSMLGIKGCPAFDVAAACAGFTYALSVADQYVKSGAVKYALVVGSDVLARTCDPTDRGTIIIFGDGAGAAVLAASEEPGIISTHLHADGSYGELLTLPNADRVNPENSIHLTMAGNEVFKVAVTELAHIVDETLAANNLDRSQLDWLVPHQANLRIISATAKKLGMSMDNVVVTLDRHGNTSAASVPCALDEAVRDGRIKPGQLVLLEAFGGGFTWGSALVRF</sequence>
<accession>P0A6R2</accession>
<accession>P24249</accession>
<protein>
    <recommendedName>
        <fullName evidence="1">Beta-ketoacyl-[acyl-carrier-protein] synthase III</fullName>
        <shortName evidence="1">Beta-ketoacyl-ACP synthase III</shortName>
        <shortName evidence="1">KAS III</shortName>
        <ecNumber evidence="1">2.3.1.180</ecNumber>
    </recommendedName>
    <alternativeName>
        <fullName evidence="1">3-oxoacyl-[acyl-carrier-protein] synthase 3</fullName>
    </alternativeName>
    <alternativeName>
        <fullName evidence="1">3-oxoacyl-[acyl-carrier-protein] synthase III</fullName>
    </alternativeName>
</protein>
<organism>
    <name type="scientific">Escherichia coli O157:H7</name>
    <dbReference type="NCBI Taxonomy" id="83334"/>
    <lineage>
        <taxon>Bacteria</taxon>
        <taxon>Pseudomonadati</taxon>
        <taxon>Pseudomonadota</taxon>
        <taxon>Gammaproteobacteria</taxon>
        <taxon>Enterobacterales</taxon>
        <taxon>Enterobacteriaceae</taxon>
        <taxon>Escherichia</taxon>
    </lineage>
</organism>
<name>FABH_ECO57</name>
<dbReference type="EC" id="2.3.1.180" evidence="1"/>
<dbReference type="EMBL" id="AE005174">
    <property type="protein sequence ID" value="AAG55837.1"/>
    <property type="molecule type" value="Genomic_DNA"/>
</dbReference>
<dbReference type="EMBL" id="BA000007">
    <property type="protein sequence ID" value="BAB34892.1"/>
    <property type="molecule type" value="Genomic_DNA"/>
</dbReference>
<dbReference type="PIR" id="A85672">
    <property type="entry name" value="A85672"/>
</dbReference>
<dbReference type="PIR" id="E90812">
    <property type="entry name" value="E90812"/>
</dbReference>
<dbReference type="RefSeq" id="NP_309496.1">
    <property type="nucleotide sequence ID" value="NC_002695.1"/>
</dbReference>
<dbReference type="RefSeq" id="WP_000288132.1">
    <property type="nucleotide sequence ID" value="NZ_VOAI01000018.1"/>
</dbReference>
<dbReference type="SMR" id="P0A6R2"/>
<dbReference type="STRING" id="155864.Z1730"/>
<dbReference type="GeneID" id="913793"/>
<dbReference type="GeneID" id="93776317"/>
<dbReference type="KEGG" id="ece:Z1730"/>
<dbReference type="KEGG" id="ecs:ECs_1469"/>
<dbReference type="PATRIC" id="fig|386585.9.peg.1569"/>
<dbReference type="eggNOG" id="COG0332">
    <property type="taxonomic scope" value="Bacteria"/>
</dbReference>
<dbReference type="HOGENOM" id="CLU_039592_4_1_6"/>
<dbReference type="OMA" id="WGSEGDK"/>
<dbReference type="UniPathway" id="UPA00094"/>
<dbReference type="Proteomes" id="UP000000558">
    <property type="component" value="Chromosome"/>
</dbReference>
<dbReference type="Proteomes" id="UP000002519">
    <property type="component" value="Chromosome"/>
</dbReference>
<dbReference type="GO" id="GO:0005737">
    <property type="term" value="C:cytoplasm"/>
    <property type="evidence" value="ECO:0007669"/>
    <property type="project" value="UniProtKB-SubCell"/>
</dbReference>
<dbReference type="GO" id="GO:0004315">
    <property type="term" value="F:3-oxoacyl-[acyl-carrier-protein] synthase activity"/>
    <property type="evidence" value="ECO:0007669"/>
    <property type="project" value="InterPro"/>
</dbReference>
<dbReference type="GO" id="GO:0033818">
    <property type="term" value="F:beta-ketoacyl-acyl-carrier-protein synthase III activity"/>
    <property type="evidence" value="ECO:0007669"/>
    <property type="project" value="UniProtKB-UniRule"/>
</dbReference>
<dbReference type="GO" id="GO:0006633">
    <property type="term" value="P:fatty acid biosynthetic process"/>
    <property type="evidence" value="ECO:0007669"/>
    <property type="project" value="UniProtKB-UniRule"/>
</dbReference>
<dbReference type="CDD" id="cd00830">
    <property type="entry name" value="KAS_III"/>
    <property type="match status" value="1"/>
</dbReference>
<dbReference type="FunFam" id="3.40.47.10:FF:000004">
    <property type="entry name" value="3-oxoacyl-[acyl-carrier-protein] synthase 3"/>
    <property type="match status" value="1"/>
</dbReference>
<dbReference type="Gene3D" id="3.40.47.10">
    <property type="match status" value="1"/>
</dbReference>
<dbReference type="HAMAP" id="MF_01815">
    <property type="entry name" value="FabH"/>
    <property type="match status" value="1"/>
</dbReference>
<dbReference type="InterPro" id="IPR013747">
    <property type="entry name" value="ACP_syn_III_C"/>
</dbReference>
<dbReference type="InterPro" id="IPR013751">
    <property type="entry name" value="ACP_syn_III_N"/>
</dbReference>
<dbReference type="InterPro" id="IPR004655">
    <property type="entry name" value="FabH"/>
</dbReference>
<dbReference type="InterPro" id="IPR016039">
    <property type="entry name" value="Thiolase-like"/>
</dbReference>
<dbReference type="NCBIfam" id="TIGR00747">
    <property type="entry name" value="fabH"/>
    <property type="match status" value="1"/>
</dbReference>
<dbReference type="NCBIfam" id="NF006829">
    <property type="entry name" value="PRK09352.1"/>
    <property type="match status" value="1"/>
</dbReference>
<dbReference type="PANTHER" id="PTHR43091">
    <property type="entry name" value="3-OXOACYL-[ACYL-CARRIER-PROTEIN] SYNTHASE"/>
    <property type="match status" value="1"/>
</dbReference>
<dbReference type="PANTHER" id="PTHR43091:SF1">
    <property type="entry name" value="BETA-KETOACYL-[ACYL-CARRIER-PROTEIN] SYNTHASE III, CHLOROPLASTIC"/>
    <property type="match status" value="1"/>
</dbReference>
<dbReference type="Pfam" id="PF08545">
    <property type="entry name" value="ACP_syn_III"/>
    <property type="match status" value="1"/>
</dbReference>
<dbReference type="Pfam" id="PF08541">
    <property type="entry name" value="ACP_syn_III_C"/>
    <property type="match status" value="1"/>
</dbReference>
<dbReference type="SUPFAM" id="SSF53901">
    <property type="entry name" value="Thiolase-like"/>
    <property type="match status" value="1"/>
</dbReference>
<reference key="1">
    <citation type="journal article" date="2001" name="Nature">
        <title>Genome sequence of enterohaemorrhagic Escherichia coli O157:H7.</title>
        <authorList>
            <person name="Perna N.T."/>
            <person name="Plunkett G. III"/>
            <person name="Burland V."/>
            <person name="Mau B."/>
            <person name="Glasner J.D."/>
            <person name="Rose D.J."/>
            <person name="Mayhew G.F."/>
            <person name="Evans P.S."/>
            <person name="Gregor J."/>
            <person name="Kirkpatrick H.A."/>
            <person name="Posfai G."/>
            <person name="Hackett J."/>
            <person name="Klink S."/>
            <person name="Boutin A."/>
            <person name="Shao Y."/>
            <person name="Miller L."/>
            <person name="Grotbeck E.J."/>
            <person name="Davis N.W."/>
            <person name="Lim A."/>
            <person name="Dimalanta E.T."/>
            <person name="Potamousis K."/>
            <person name="Apodaca J."/>
            <person name="Anantharaman T.S."/>
            <person name="Lin J."/>
            <person name="Yen G."/>
            <person name="Schwartz D.C."/>
            <person name="Welch R.A."/>
            <person name="Blattner F.R."/>
        </authorList>
    </citation>
    <scope>NUCLEOTIDE SEQUENCE [LARGE SCALE GENOMIC DNA]</scope>
    <source>
        <strain>O157:H7 / EDL933 / ATCC 700927 / EHEC</strain>
    </source>
</reference>
<reference key="2">
    <citation type="journal article" date="2001" name="DNA Res.">
        <title>Complete genome sequence of enterohemorrhagic Escherichia coli O157:H7 and genomic comparison with a laboratory strain K-12.</title>
        <authorList>
            <person name="Hayashi T."/>
            <person name="Makino K."/>
            <person name="Ohnishi M."/>
            <person name="Kurokawa K."/>
            <person name="Ishii K."/>
            <person name="Yokoyama K."/>
            <person name="Han C.-G."/>
            <person name="Ohtsubo E."/>
            <person name="Nakayama K."/>
            <person name="Murata T."/>
            <person name="Tanaka M."/>
            <person name="Tobe T."/>
            <person name="Iida T."/>
            <person name="Takami H."/>
            <person name="Honda T."/>
            <person name="Sasakawa C."/>
            <person name="Ogasawara N."/>
            <person name="Yasunaga T."/>
            <person name="Kuhara S."/>
            <person name="Shiba T."/>
            <person name="Hattori M."/>
            <person name="Shinagawa H."/>
        </authorList>
    </citation>
    <scope>NUCLEOTIDE SEQUENCE [LARGE SCALE GENOMIC DNA]</scope>
    <source>
        <strain>O157:H7 / Sakai / RIMD 0509952 / EHEC</strain>
    </source>
</reference>
<feature type="chain" id="PRO_0000110426" description="Beta-ketoacyl-[acyl-carrier-protein] synthase III">
    <location>
        <begin position="1"/>
        <end position="317"/>
    </location>
</feature>
<feature type="region of interest" description="ACP-binding" evidence="1">
    <location>
        <begin position="245"/>
        <end position="249"/>
    </location>
</feature>
<feature type="active site" evidence="1">
    <location>
        <position position="112"/>
    </location>
</feature>
<feature type="active site" evidence="1">
    <location>
        <position position="244"/>
    </location>
</feature>
<feature type="active site" evidence="1">
    <location>
        <position position="274"/>
    </location>
</feature>
<gene>
    <name evidence="1" type="primary">fabH</name>
    <name type="ordered locus">Z1730</name>
    <name type="ordered locus">ECs1469</name>
</gene>